<evidence type="ECO:0000250" key="1"/>
<evidence type="ECO:0000250" key="2">
    <source>
        <dbReference type="UniProtKB" id="Q2G0D9"/>
    </source>
</evidence>
<evidence type="ECO:0000250" key="3">
    <source>
        <dbReference type="UniProtKB" id="Q2G0E0"/>
    </source>
</evidence>
<evidence type="ECO:0000255" key="4">
    <source>
        <dbReference type="PROSITE-ProRule" id="PRU00169"/>
    </source>
</evidence>
<evidence type="ECO:0000255" key="5">
    <source>
        <dbReference type="PROSITE-ProRule" id="PRU01091"/>
    </source>
</evidence>
<gene>
    <name type="primary">graR</name>
    <name type="ordered locus">SAV0659</name>
</gene>
<accession>Q932F1</accession>
<protein>
    <recommendedName>
        <fullName>Response regulator protein GraR</fullName>
    </recommendedName>
    <alternativeName>
        <fullName>Glycopeptide resistance-associated protein R</fullName>
    </alternativeName>
</protein>
<organism>
    <name type="scientific">Staphylococcus aureus (strain Mu50 / ATCC 700699)</name>
    <dbReference type="NCBI Taxonomy" id="158878"/>
    <lineage>
        <taxon>Bacteria</taxon>
        <taxon>Bacillati</taxon>
        <taxon>Bacillota</taxon>
        <taxon>Bacilli</taxon>
        <taxon>Bacillales</taxon>
        <taxon>Staphylococcaceae</taxon>
        <taxon>Staphylococcus</taxon>
    </lineage>
</organism>
<proteinExistence type="evidence at protein level"/>
<comment type="function">
    <text evidence="3">Member of the two-component regulatory system GraR/GraS involved in resistance against cationic antimicrobial peptides (CAMPs). Upon phosphorylation by GraS, functions as a transcription regulator by direct binding to promoter regions of target genes such as adhesins, exoproteins, transporters, toxins, and proteins involved in cell wall synthesis. Down-regulates the expression of many genes involved in RNA and amino acid synthesis or glycolysis.</text>
</comment>
<comment type="subunit">
    <text evidence="2">Interacts with GraX.</text>
</comment>
<comment type="subcellular location">
    <subcellularLocation>
        <location evidence="1">Cytoplasm</location>
    </subcellularLocation>
</comment>
<comment type="PTM">
    <text evidence="3">Phosphorylated by GraS. Phosphorylated by Stk1; phosphorylation increases the DNA-binding activity of GraR.</text>
</comment>
<feature type="chain" id="PRO_0000347902" description="Response regulator protein GraR">
    <location>
        <begin position="1"/>
        <end position="224"/>
    </location>
</feature>
<feature type="domain" description="Response regulatory" evidence="4">
    <location>
        <begin position="2"/>
        <end position="115"/>
    </location>
</feature>
<feature type="DNA-binding region" description="OmpR/PhoB-type" evidence="5">
    <location>
        <begin position="126"/>
        <end position="224"/>
    </location>
</feature>
<feature type="modified residue" description="4-aspartylphosphate" evidence="4">
    <location>
        <position position="51"/>
    </location>
</feature>
<feature type="modified residue" description="Phosphothreonine" evidence="3">
    <location>
        <position position="128"/>
    </location>
</feature>
<feature type="modified residue" description="Phosphothreonine" evidence="3">
    <location>
        <position position="130"/>
    </location>
</feature>
<feature type="modified residue" description="Phosphothreonine" evidence="3">
    <location>
        <position position="149"/>
    </location>
</feature>
<name>GRAR_STAAM</name>
<keyword id="KW-0010">Activator</keyword>
<keyword id="KW-0046">Antibiotic resistance</keyword>
<keyword id="KW-0963">Cytoplasm</keyword>
<keyword id="KW-0238">DNA-binding</keyword>
<keyword id="KW-0597">Phosphoprotein</keyword>
<keyword id="KW-0678">Repressor</keyword>
<keyword id="KW-0804">Transcription</keyword>
<keyword id="KW-0805">Transcription regulation</keyword>
<keyword id="KW-0902">Two-component regulatory system</keyword>
<keyword id="KW-0843">Virulence</keyword>
<reference key="1">
    <citation type="journal article" date="2001" name="Lancet">
        <title>Whole genome sequencing of meticillin-resistant Staphylococcus aureus.</title>
        <authorList>
            <person name="Kuroda M."/>
            <person name="Ohta T."/>
            <person name="Uchiyama I."/>
            <person name="Baba T."/>
            <person name="Yuzawa H."/>
            <person name="Kobayashi I."/>
            <person name="Cui L."/>
            <person name="Oguchi A."/>
            <person name="Aoki K."/>
            <person name="Nagai Y."/>
            <person name="Lian J.-Q."/>
            <person name="Ito T."/>
            <person name="Kanamori M."/>
            <person name="Matsumaru H."/>
            <person name="Maruyama A."/>
            <person name="Murakami H."/>
            <person name="Hosoyama A."/>
            <person name="Mizutani-Ui Y."/>
            <person name="Takahashi N.K."/>
            <person name="Sawano T."/>
            <person name="Inoue R."/>
            <person name="Kaito C."/>
            <person name="Sekimizu K."/>
            <person name="Hirakawa H."/>
            <person name="Kuhara S."/>
            <person name="Goto S."/>
            <person name="Yabuzaki J."/>
            <person name="Kanehisa M."/>
            <person name="Yamashita A."/>
            <person name="Oshima K."/>
            <person name="Furuya K."/>
            <person name="Yoshino C."/>
            <person name="Shiba T."/>
            <person name="Hattori M."/>
            <person name="Ogasawara N."/>
            <person name="Hayashi H."/>
            <person name="Hiramatsu K."/>
        </authorList>
    </citation>
    <scope>NUCLEOTIDE SEQUENCE [LARGE SCALE GENOMIC DNA]</scope>
    <source>
        <strain>Mu50 / ATCC 700699</strain>
    </source>
</reference>
<reference key="2">
    <citation type="journal article" date="2007" name="Antimicrob. Agents Chemother.">
        <title>Interaction of the graRS two-component system with the vraFG ABC transporter to support vancomycin-intermediate resistance in Staphylococcus aureus.</title>
        <authorList>
            <person name="Meehl M."/>
            <person name="Herbert S."/>
            <person name="Goetz F."/>
            <person name="Cheung A."/>
        </authorList>
    </citation>
    <scope>FUNCTION IN CATIONIC ANTIMICROBIAL PEPTIDE RESISTANCE</scope>
</reference>
<sequence>MQILLVEDDNTLFQELKKELEQWDFNVAGIEDFGKVMDTFESFNPEIVILDVQLPKYDGFYWCRKMREVSNVPILFLSSRDNPMDQVMSMELGADDYMQKPFYTNVLIAKLQAIYRRVYEFTAEEKRTLTWQDAVVDLSKDSIQKGDDTIFLSKTEMIILEILITKKNQIVSRDTIITALWDDEAFVSDNTLTVNVSRLRKKLSEISMDSAIETKVGKGYMAHE</sequence>
<dbReference type="EMBL" id="BA000017">
    <property type="protein sequence ID" value="BAB56821.1"/>
    <property type="molecule type" value="Genomic_DNA"/>
</dbReference>
<dbReference type="RefSeq" id="WP_001166501.1">
    <property type="nucleotide sequence ID" value="NC_002758.2"/>
</dbReference>
<dbReference type="SMR" id="Q932F1"/>
<dbReference type="KEGG" id="sav:SAV0659"/>
<dbReference type="HOGENOM" id="CLU_000445_30_3_9"/>
<dbReference type="PhylomeDB" id="Q932F1"/>
<dbReference type="Proteomes" id="UP000002481">
    <property type="component" value="Chromosome"/>
</dbReference>
<dbReference type="GO" id="GO:0005829">
    <property type="term" value="C:cytosol"/>
    <property type="evidence" value="ECO:0007669"/>
    <property type="project" value="TreeGrafter"/>
</dbReference>
<dbReference type="GO" id="GO:0032993">
    <property type="term" value="C:protein-DNA complex"/>
    <property type="evidence" value="ECO:0007669"/>
    <property type="project" value="TreeGrafter"/>
</dbReference>
<dbReference type="GO" id="GO:0000156">
    <property type="term" value="F:phosphorelay response regulator activity"/>
    <property type="evidence" value="ECO:0007669"/>
    <property type="project" value="TreeGrafter"/>
</dbReference>
<dbReference type="GO" id="GO:0000976">
    <property type="term" value="F:transcription cis-regulatory region binding"/>
    <property type="evidence" value="ECO:0007669"/>
    <property type="project" value="TreeGrafter"/>
</dbReference>
<dbReference type="GO" id="GO:0006355">
    <property type="term" value="P:regulation of DNA-templated transcription"/>
    <property type="evidence" value="ECO:0007669"/>
    <property type="project" value="InterPro"/>
</dbReference>
<dbReference type="GO" id="GO:0046677">
    <property type="term" value="P:response to antibiotic"/>
    <property type="evidence" value="ECO:0007669"/>
    <property type="project" value="UniProtKB-KW"/>
</dbReference>
<dbReference type="CDD" id="cd18159">
    <property type="entry name" value="REC_OmpR_NsrR-like"/>
    <property type="match status" value="1"/>
</dbReference>
<dbReference type="CDD" id="cd00383">
    <property type="entry name" value="trans_reg_C"/>
    <property type="match status" value="1"/>
</dbReference>
<dbReference type="FunFam" id="3.40.50.2300:FF:000232">
    <property type="entry name" value="Response regulator GraR"/>
    <property type="match status" value="1"/>
</dbReference>
<dbReference type="FunFam" id="1.10.10.10:FF:000546">
    <property type="entry name" value="Two-component response regulator GraR"/>
    <property type="match status" value="1"/>
</dbReference>
<dbReference type="Gene3D" id="3.40.50.2300">
    <property type="match status" value="1"/>
</dbReference>
<dbReference type="Gene3D" id="1.10.10.10">
    <property type="entry name" value="Winged helix-like DNA-binding domain superfamily/Winged helix DNA-binding domain"/>
    <property type="match status" value="1"/>
</dbReference>
<dbReference type="InterPro" id="IPR011006">
    <property type="entry name" value="CheY-like_superfamily"/>
</dbReference>
<dbReference type="InterPro" id="IPR001867">
    <property type="entry name" value="OmpR/PhoB-type_DNA-bd"/>
</dbReference>
<dbReference type="InterPro" id="IPR016032">
    <property type="entry name" value="Sig_transdc_resp-reg_C-effctor"/>
</dbReference>
<dbReference type="InterPro" id="IPR001789">
    <property type="entry name" value="Sig_transdc_resp-reg_receiver"/>
</dbReference>
<dbReference type="InterPro" id="IPR039420">
    <property type="entry name" value="WalR-like"/>
</dbReference>
<dbReference type="InterPro" id="IPR036388">
    <property type="entry name" value="WH-like_DNA-bd_sf"/>
</dbReference>
<dbReference type="PANTHER" id="PTHR48111">
    <property type="entry name" value="REGULATOR OF RPOS"/>
    <property type="match status" value="1"/>
</dbReference>
<dbReference type="PANTHER" id="PTHR48111:SF27">
    <property type="entry name" value="SENSORY TRANSDUCTION PROTEIN BCER"/>
    <property type="match status" value="1"/>
</dbReference>
<dbReference type="Pfam" id="PF00072">
    <property type="entry name" value="Response_reg"/>
    <property type="match status" value="1"/>
</dbReference>
<dbReference type="Pfam" id="PF00486">
    <property type="entry name" value="Trans_reg_C"/>
    <property type="match status" value="1"/>
</dbReference>
<dbReference type="SMART" id="SM00448">
    <property type="entry name" value="REC"/>
    <property type="match status" value="1"/>
</dbReference>
<dbReference type="SMART" id="SM00862">
    <property type="entry name" value="Trans_reg_C"/>
    <property type="match status" value="1"/>
</dbReference>
<dbReference type="SUPFAM" id="SSF46894">
    <property type="entry name" value="C-terminal effector domain of the bipartite response regulators"/>
    <property type="match status" value="1"/>
</dbReference>
<dbReference type="SUPFAM" id="SSF52172">
    <property type="entry name" value="CheY-like"/>
    <property type="match status" value="1"/>
</dbReference>
<dbReference type="PROSITE" id="PS51755">
    <property type="entry name" value="OMPR_PHOB"/>
    <property type="match status" value="1"/>
</dbReference>
<dbReference type="PROSITE" id="PS50110">
    <property type="entry name" value="RESPONSE_REGULATORY"/>
    <property type="match status" value="1"/>
</dbReference>